<evidence type="ECO:0000250" key="1"/>
<evidence type="ECO:0000250" key="2">
    <source>
        <dbReference type="UniProtKB" id="O00180"/>
    </source>
</evidence>
<evidence type="ECO:0000250" key="3">
    <source>
        <dbReference type="UniProtKB" id="P35560"/>
    </source>
</evidence>
<evidence type="ECO:0000250" key="4">
    <source>
        <dbReference type="UniProtKB" id="P48048"/>
    </source>
</evidence>
<evidence type="ECO:0000250" key="5">
    <source>
        <dbReference type="UniProtKB" id="Q63472"/>
    </source>
</evidence>
<evidence type="ECO:0000255" key="6"/>
<evidence type="ECO:0000305" key="7"/>
<comment type="function">
    <text evidence="4">Inward rectifier potassium channels are characterized by a greater tendency to allow potassium to flow into the cell rather than out of it. Their voltage dependence is regulated by the concentration of extracellular potassium; as external potassium is raised, the voltage range of the channel opening shifts to more positive voltages. The inward rectification is mainly due to the blockage of outward current by internal magnesium. This channel is activated by internal ATP and can be blocked by external barium. In the kidney, probably plays a major role in potassium homeostasis.</text>
</comment>
<comment type="catalytic activity">
    <reaction evidence="4">
        <text>K(+)(in) = K(+)(out)</text>
        <dbReference type="Rhea" id="RHEA:29463"/>
        <dbReference type="ChEBI" id="CHEBI:29103"/>
    </reaction>
</comment>
<comment type="activity regulation">
    <text evidence="3 4">Inhibited by WNK3. Activated by phosphatidylinositol 4,5 biphosphate (PtdIns(4,5)P2).</text>
</comment>
<comment type="subunit">
    <text evidence="4">Interacts with SGK1 and SLC9A3R2/NHERF2.</text>
</comment>
<comment type="subcellular location">
    <subcellularLocation>
        <location evidence="4">Cell membrane</location>
        <topology evidence="6">Multi-pass membrane protein</topology>
    </subcellularLocation>
    <text evidence="4">Phosphorylation at Ser-44 by SGK1 is necessary for its expression at the cell membrane.</text>
</comment>
<comment type="alternative products">
    <event type="alternative splicing"/>
    <isoform>
        <id>O88335-1</id>
        <name>1</name>
        <sequence type="displayed"/>
    </isoform>
    <text>A number of isoforms are produced.</text>
</comment>
<comment type="PTM">
    <text evidence="4">Phosphorylation at Ser-25 by SGK1 is necessary for its expression at the cell membrane.</text>
</comment>
<comment type="similarity">
    <text evidence="7">Belongs to the inward rectifier-type potassium channel (TC 1.A.2.1) family. KCNJ1 subfamily.</text>
</comment>
<protein>
    <recommendedName>
        <fullName>ATP-sensitive inward rectifier potassium channel 1</fullName>
    </recommendedName>
    <alternativeName>
        <fullName>ATP-regulated potassium channel ROM-K</fullName>
    </alternativeName>
    <alternativeName>
        <fullName>Inward rectifier K(+) channel Kir1.1</fullName>
    </alternativeName>
    <alternativeName>
        <fullName>Potassium channel, inwardly rectifying subfamily J member 1</fullName>
    </alternativeName>
</protein>
<feature type="chain" id="PRO_0000154918" description="ATP-sensitive inward rectifier potassium channel 1">
    <location>
        <begin position="1"/>
        <end position="372"/>
    </location>
</feature>
<feature type="topological domain" description="Cytoplasmic" evidence="2">
    <location>
        <begin position="1"/>
        <end position="58"/>
    </location>
</feature>
<feature type="transmembrane region" description="Helical; Name=M1" evidence="1">
    <location>
        <begin position="59"/>
        <end position="83"/>
    </location>
</feature>
<feature type="topological domain" description="Extracellular" evidence="2">
    <location>
        <begin position="84"/>
        <end position="108"/>
    </location>
</feature>
<feature type="intramembrane region" description="Helical; Pore-forming; Name=H5" evidence="1">
    <location>
        <begin position="109"/>
        <end position="120"/>
    </location>
</feature>
<feature type="intramembrane region" description="Pore-forming" evidence="1">
    <location>
        <begin position="121"/>
        <end position="127"/>
    </location>
</feature>
<feature type="topological domain" description="Extracellular" evidence="2">
    <location>
        <begin position="128"/>
        <end position="136"/>
    </location>
</feature>
<feature type="transmembrane region" description="Helical; Name=M2" evidence="1">
    <location>
        <begin position="137"/>
        <end position="158"/>
    </location>
</feature>
<feature type="topological domain" description="Cytoplasmic" evidence="2">
    <location>
        <begin position="159"/>
        <end position="372"/>
    </location>
</feature>
<feature type="region of interest" description="Polyphosphoinositide (PIP2)-binding" evidence="3">
    <location>
        <begin position="161"/>
        <end position="188"/>
    </location>
</feature>
<feature type="short sequence motif" description="Selectivity filter" evidence="5">
    <location>
        <begin position="122"/>
        <end position="127"/>
    </location>
</feature>
<feature type="binding site" evidence="6">
    <location>
        <begin position="204"/>
        <end position="211"/>
    </location>
    <ligand>
        <name>ATP</name>
        <dbReference type="ChEBI" id="CHEBI:30616"/>
    </ligand>
</feature>
<feature type="site" description="Role in the control of polyamine-mediated channel gating and in the blocking by intracellular magnesium" evidence="1">
    <location>
        <position position="152"/>
    </location>
</feature>
<feature type="modified residue" description="Phosphoserine; by SGK1" evidence="4">
    <location>
        <position position="25"/>
    </location>
</feature>
<feature type="glycosylation site" description="N-linked (GlcNAc...) asparagine" evidence="6">
    <location>
        <position position="98"/>
    </location>
</feature>
<accession>O88335</accession>
<dbReference type="EMBL" id="AF012834">
    <property type="protein sequence ID" value="AAC24973.1"/>
    <property type="molecule type" value="mRNA"/>
</dbReference>
<dbReference type="EMBL" id="BC020525">
    <property type="protein sequence ID" value="AAH20525.1"/>
    <property type="molecule type" value="mRNA"/>
</dbReference>
<dbReference type="CCDS" id="CCDS22953.1">
    <molecule id="O88335-1"/>
</dbReference>
<dbReference type="RefSeq" id="NP_062633.1">
    <molecule id="O88335-1"/>
    <property type="nucleotide sequence ID" value="NM_019659.3"/>
</dbReference>
<dbReference type="SMR" id="O88335"/>
<dbReference type="BioGRID" id="207940">
    <property type="interactions" value="5"/>
</dbReference>
<dbReference type="FunCoup" id="O88335">
    <property type="interactions" value="324"/>
</dbReference>
<dbReference type="IntAct" id="O88335">
    <property type="interactions" value="3"/>
</dbReference>
<dbReference type="STRING" id="10090.ENSMUSP00000131625"/>
<dbReference type="GlyCosmos" id="O88335">
    <property type="glycosylation" value="1 site, No reported glycans"/>
</dbReference>
<dbReference type="GlyGen" id="O88335">
    <property type="glycosylation" value="2 sites"/>
</dbReference>
<dbReference type="iPTMnet" id="O88335"/>
<dbReference type="PhosphoSitePlus" id="O88335"/>
<dbReference type="PaxDb" id="10090-ENSMUSP00000131625"/>
<dbReference type="ProteomicsDB" id="269202">
    <molecule id="O88335-1"/>
</dbReference>
<dbReference type="Antibodypedia" id="33020">
    <property type="antibodies" value="284 antibodies from 30 providers"/>
</dbReference>
<dbReference type="DNASU" id="56379"/>
<dbReference type="Ensembl" id="ENSMUST00000047334.10">
    <molecule id="O88335-1"/>
    <property type="protein sequence ID" value="ENSMUSP00000046793.9"/>
    <property type="gene ID" value="ENSMUSG00000041248.10"/>
</dbReference>
<dbReference type="Ensembl" id="ENSMUST00000213393.2">
    <molecule id="O88335-1"/>
    <property type="protein sequence ID" value="ENSMUSP00000150540.2"/>
    <property type="gene ID" value="ENSMUSG00000041248.10"/>
</dbReference>
<dbReference type="GeneID" id="56379"/>
<dbReference type="KEGG" id="mmu:56379"/>
<dbReference type="UCSC" id="uc009orx.2">
    <molecule id="O88335-1"/>
    <property type="organism name" value="mouse"/>
</dbReference>
<dbReference type="AGR" id="MGI:1927248"/>
<dbReference type="CTD" id="3758"/>
<dbReference type="MGI" id="MGI:1927248">
    <property type="gene designation" value="Kcnj1"/>
</dbReference>
<dbReference type="VEuPathDB" id="HostDB:ENSMUSG00000041248"/>
<dbReference type="eggNOG" id="KOG3827">
    <property type="taxonomic scope" value="Eukaryota"/>
</dbReference>
<dbReference type="GeneTree" id="ENSGT00990000203615"/>
<dbReference type="HOGENOM" id="CLU_022738_3_0_1"/>
<dbReference type="InParanoid" id="O88335"/>
<dbReference type="OMA" id="HCALCLY"/>
<dbReference type="OrthoDB" id="273257at2759"/>
<dbReference type="PhylomeDB" id="O88335"/>
<dbReference type="Reactome" id="R-MMU-1296067">
    <property type="pathway name" value="Potassium transport channels"/>
</dbReference>
<dbReference type="BioGRID-ORCS" id="56379">
    <property type="hits" value="1 hit in 77 CRISPR screens"/>
</dbReference>
<dbReference type="ChiTaRS" id="Kcnj1">
    <property type="organism name" value="mouse"/>
</dbReference>
<dbReference type="PRO" id="PR:O88335"/>
<dbReference type="Proteomes" id="UP000000589">
    <property type="component" value="Chromosome 9"/>
</dbReference>
<dbReference type="RNAct" id="O88335">
    <property type="molecule type" value="protein"/>
</dbReference>
<dbReference type="Bgee" id="ENSMUSG00000041248">
    <property type="expression patterns" value="Expressed in right kidney and 51 other cell types or tissues"/>
</dbReference>
<dbReference type="ExpressionAtlas" id="O88335">
    <property type="expression patterns" value="baseline and differential"/>
</dbReference>
<dbReference type="GO" id="GO:0034702">
    <property type="term" value="C:monoatomic ion channel complex"/>
    <property type="evidence" value="ECO:0007669"/>
    <property type="project" value="UniProtKB-KW"/>
</dbReference>
<dbReference type="GO" id="GO:0005886">
    <property type="term" value="C:plasma membrane"/>
    <property type="evidence" value="ECO:0007669"/>
    <property type="project" value="UniProtKB-SubCell"/>
</dbReference>
<dbReference type="GO" id="GO:0005524">
    <property type="term" value="F:ATP binding"/>
    <property type="evidence" value="ECO:0007669"/>
    <property type="project" value="UniProtKB-KW"/>
</dbReference>
<dbReference type="GO" id="GO:0005242">
    <property type="term" value="F:inward rectifier potassium channel activity"/>
    <property type="evidence" value="ECO:0000250"/>
    <property type="project" value="UniProtKB"/>
</dbReference>
<dbReference type="GO" id="GO:0005546">
    <property type="term" value="F:phosphatidylinositol-4,5-bisphosphate binding"/>
    <property type="evidence" value="ECO:0000250"/>
    <property type="project" value="UniProtKB"/>
</dbReference>
<dbReference type="GO" id="GO:0072359">
    <property type="term" value="P:circulatory system development"/>
    <property type="evidence" value="ECO:0000315"/>
    <property type="project" value="MGI"/>
</dbReference>
<dbReference type="GO" id="GO:0010467">
    <property type="term" value="P:gene expression"/>
    <property type="evidence" value="ECO:0000315"/>
    <property type="project" value="MGI"/>
</dbReference>
<dbReference type="GO" id="GO:0001822">
    <property type="term" value="P:kidney development"/>
    <property type="evidence" value="ECO:0000315"/>
    <property type="project" value="MGI"/>
</dbReference>
<dbReference type="GO" id="GO:0009791">
    <property type="term" value="P:post-embryonic development"/>
    <property type="evidence" value="ECO:0000315"/>
    <property type="project" value="MGI"/>
</dbReference>
<dbReference type="GO" id="GO:1990573">
    <property type="term" value="P:potassium ion import across plasma membrane"/>
    <property type="evidence" value="ECO:0000250"/>
    <property type="project" value="UniProtKB"/>
</dbReference>
<dbReference type="GO" id="GO:0034765">
    <property type="term" value="P:regulation of monoatomic ion transmembrane transport"/>
    <property type="evidence" value="ECO:0007669"/>
    <property type="project" value="InterPro"/>
</dbReference>
<dbReference type="GO" id="GO:0070294">
    <property type="term" value="P:renal sodium ion absorption"/>
    <property type="evidence" value="ECO:0000315"/>
    <property type="project" value="MGI"/>
</dbReference>
<dbReference type="GO" id="GO:0001894">
    <property type="term" value="P:tissue homeostasis"/>
    <property type="evidence" value="ECO:0000315"/>
    <property type="project" value="MGI"/>
</dbReference>
<dbReference type="FunFam" id="1.10.287.70:FF:000036">
    <property type="entry name" value="ATP-sensitive inward rectifier potassium channel 1"/>
    <property type="match status" value="1"/>
</dbReference>
<dbReference type="FunFam" id="2.60.40.1400:FF:000002">
    <property type="entry name" value="ATP-sensitive inward rectifier potassium channel 1"/>
    <property type="match status" value="1"/>
</dbReference>
<dbReference type="Gene3D" id="1.10.287.70">
    <property type="match status" value="1"/>
</dbReference>
<dbReference type="Gene3D" id="2.60.40.1400">
    <property type="entry name" value="G protein-activated inward rectifier potassium channel 1"/>
    <property type="match status" value="1"/>
</dbReference>
<dbReference type="InterPro" id="IPR014756">
    <property type="entry name" value="Ig_E-set"/>
</dbReference>
<dbReference type="InterPro" id="IPR041647">
    <property type="entry name" value="IRK_C"/>
</dbReference>
<dbReference type="InterPro" id="IPR016449">
    <property type="entry name" value="K_chnl_inward-rec_Kir"/>
</dbReference>
<dbReference type="InterPro" id="IPR003268">
    <property type="entry name" value="K_chnl_inward-rec_Kir1.1"/>
</dbReference>
<dbReference type="InterPro" id="IPR013518">
    <property type="entry name" value="K_chnl_inward-rec_Kir_cyto"/>
</dbReference>
<dbReference type="InterPro" id="IPR040445">
    <property type="entry name" value="Kir_TM"/>
</dbReference>
<dbReference type="PANTHER" id="PTHR11767:SF6">
    <property type="entry name" value="ATP-SENSITIVE INWARD RECTIFIER POTASSIUM CHANNEL 1"/>
    <property type="match status" value="1"/>
</dbReference>
<dbReference type="PANTHER" id="PTHR11767">
    <property type="entry name" value="INWARD RECTIFIER POTASSIUM CHANNEL"/>
    <property type="match status" value="1"/>
</dbReference>
<dbReference type="Pfam" id="PF01007">
    <property type="entry name" value="IRK"/>
    <property type="match status" value="1"/>
</dbReference>
<dbReference type="Pfam" id="PF17655">
    <property type="entry name" value="IRK_C"/>
    <property type="match status" value="1"/>
</dbReference>
<dbReference type="PIRSF" id="PIRSF005465">
    <property type="entry name" value="GIRK_kir"/>
    <property type="match status" value="1"/>
</dbReference>
<dbReference type="PRINTS" id="PR01321">
    <property type="entry name" value="KIR11CHANNEL"/>
</dbReference>
<dbReference type="PRINTS" id="PR01320">
    <property type="entry name" value="KIRCHANNEL"/>
</dbReference>
<dbReference type="SUPFAM" id="SSF81296">
    <property type="entry name" value="E set domains"/>
    <property type="match status" value="1"/>
</dbReference>
<dbReference type="SUPFAM" id="SSF81324">
    <property type="entry name" value="Voltage-gated potassium channels"/>
    <property type="match status" value="1"/>
</dbReference>
<reference key="1">
    <citation type="submission" date="1997-07" db="EMBL/GenBank/DDBJ databases">
        <title>Cloning and characterization of alternatively spliced isoforms of mouse ROMK.</title>
        <authorList>
            <person name="Xu J.Z."/>
            <person name="Mount D.B."/>
            <person name="Hebert S.C."/>
        </authorList>
    </citation>
    <scope>NUCLEOTIDE SEQUENCE [MRNA]</scope>
    <source>
        <strain>CD-1</strain>
        <tissue>Kidney</tissue>
    </source>
</reference>
<reference key="2">
    <citation type="journal article" date="2004" name="Genome Res.">
        <title>The status, quality, and expansion of the NIH full-length cDNA project: the Mammalian Gene Collection (MGC).</title>
        <authorList>
            <consortium name="The MGC Project Team"/>
        </authorList>
    </citation>
    <scope>NUCLEOTIDE SEQUENCE [LARGE SCALE MRNA]</scope>
    <source>
        <strain>FVB/N</strain>
        <tissue>Kidney</tissue>
    </source>
</reference>
<gene>
    <name type="primary">Kcnj1</name>
</gene>
<name>KCNJ1_MOUSE</name>
<sequence>MFKHLRRWFVTHIFGRSRQRARLVSKDGRCNIEFGNVDAQSRFIFFVDIWTTVLDLKWRYKMTVFITAFLGSWFLFGLLWYVVAYVHKDLPEFYPPDNRTPCVENINGMTSAFLFSLETQVTIGYGFRFVTEQCATAIFLLIFQSILGVIINSFMCGAILAKISRPKKRAKTITFSKNAVISKRGGKLCLLIRVANLRKSLLIGSHIYGKLLKTTITPEGETIILDQTNINFVVDAGNENLFFISPLTIYHIIDHNSPFFHMAAETLSQQDFELVVFLDGTVESTSATCQVRTSYIPEEVLWGYRFVPIVSKTKEGKYRVDFHNFGKTVEVETPHCAMCLYNEKDARARMKRGYDNPNFVLSEVDETDDTQM</sequence>
<keyword id="KW-0025">Alternative splicing</keyword>
<keyword id="KW-0067">ATP-binding</keyword>
<keyword id="KW-1003">Cell membrane</keyword>
<keyword id="KW-0325">Glycoprotein</keyword>
<keyword id="KW-0407">Ion channel</keyword>
<keyword id="KW-0406">Ion transport</keyword>
<keyword id="KW-0472">Membrane</keyword>
<keyword id="KW-0547">Nucleotide-binding</keyword>
<keyword id="KW-0597">Phosphoprotein</keyword>
<keyword id="KW-0630">Potassium</keyword>
<keyword id="KW-0633">Potassium transport</keyword>
<keyword id="KW-1185">Reference proteome</keyword>
<keyword id="KW-0812">Transmembrane</keyword>
<keyword id="KW-1133">Transmembrane helix</keyword>
<keyword id="KW-0813">Transport</keyword>
<keyword id="KW-0851">Voltage-gated channel</keyword>
<organism>
    <name type="scientific">Mus musculus</name>
    <name type="common">Mouse</name>
    <dbReference type="NCBI Taxonomy" id="10090"/>
    <lineage>
        <taxon>Eukaryota</taxon>
        <taxon>Metazoa</taxon>
        <taxon>Chordata</taxon>
        <taxon>Craniata</taxon>
        <taxon>Vertebrata</taxon>
        <taxon>Euteleostomi</taxon>
        <taxon>Mammalia</taxon>
        <taxon>Eutheria</taxon>
        <taxon>Euarchontoglires</taxon>
        <taxon>Glires</taxon>
        <taxon>Rodentia</taxon>
        <taxon>Myomorpha</taxon>
        <taxon>Muroidea</taxon>
        <taxon>Muridae</taxon>
        <taxon>Murinae</taxon>
        <taxon>Mus</taxon>
        <taxon>Mus</taxon>
    </lineage>
</organism>
<proteinExistence type="evidence at transcript level"/>